<comment type="function">
    <text>Core component of nucleosome. Nucleosomes wrap and compact DNA into chromatin, limiting DNA accessibility to the cellular machineries which require DNA as a template. Histones thereby play a central role in transcription regulation, DNA repair, DNA replication and chromosomal stability. DNA accessibility is regulated via a complex set of post-translational modifications of histones, also called histone code, and nucleosome remodeling.</text>
</comment>
<comment type="subunit">
    <text>The nucleosome is a histone octamer containing two molecules each of H2A, H2B, H3 and H4 assembled in one H3-H4 heterotetramer and two H2A-H2B heterodimers. The octamer wraps approximately 147 bp of DNA.</text>
</comment>
<comment type="subcellular location">
    <subcellularLocation>
        <location>Nucleus</location>
    </subcellularLocation>
    <subcellularLocation>
        <location>Chromosome</location>
    </subcellularLocation>
</comment>
<comment type="PTM">
    <text evidence="1">Monoubiquitination of Lys-119 gives a specific tag for epigenetic transcriptional repression.</text>
</comment>
<comment type="PTM">
    <text evidence="1">Phosphorylation of Ser-2 directly represses transcription.</text>
</comment>
<comment type="miscellaneous">
    <text>The H22 clone represent the major H2A component.</text>
</comment>
<comment type="similarity">
    <text evidence="3">Belongs to the histone H2A family.</text>
</comment>
<sequence>MSGRGKSGKARTKAKTRSSRAGLQFPVGRVHRFLRKGNYAKRVGGGAPVYMAAVLEYLTAEILELAGNAARDNKKSRIIPRHLQLAVRNDEELNKLLGGVTIAQGGVLPNIQAVLLPKKTAKSS</sequence>
<feature type="initiator methionine" description="Removed" evidence="1">
    <location>
        <position position="1"/>
    </location>
</feature>
<feature type="chain" id="PRO_0000055274" description="Histone H2A, embryonic">
    <location>
        <begin position="2"/>
        <end position="124"/>
    </location>
</feature>
<feature type="region of interest" description="Disordered" evidence="2">
    <location>
        <begin position="1"/>
        <end position="21"/>
    </location>
</feature>
<feature type="compositionally biased region" description="Basic residues" evidence="2">
    <location>
        <begin position="1"/>
        <end position="18"/>
    </location>
</feature>
<feature type="modified residue" description="N-acetylserine" evidence="1">
    <location>
        <position position="2"/>
    </location>
</feature>
<feature type="modified residue" description="Phosphoserine" evidence="1">
    <location>
        <position position="2"/>
    </location>
</feature>
<feature type="modified residue" description="N5-methylglutamine" evidence="1">
    <location>
        <position position="104"/>
    </location>
</feature>
<feature type="cross-link" description="Glycyl lysine isopeptide (Lys-Gly) (interchain with G-Cter in ubiquitin)" evidence="1">
    <location>
        <position position="119"/>
    </location>
</feature>
<feature type="sequence variant" description="In P.miliaris clone H22.">
    <original>T</original>
    <variation>S</variation>
    <location>
        <position position="16"/>
    </location>
</feature>
<feature type="sequence variant" description="In P.miliaris clone H22.">
    <original>A</original>
    <variation>G</variation>
    <location>
        <position position="121"/>
    </location>
</feature>
<name>H2AE_PSAMI</name>
<proteinExistence type="inferred from homology"/>
<organism>
    <name type="scientific">Psammechinus miliaris</name>
    <name type="common">Green sea urchin</name>
    <name type="synonym">Echinus miliaris</name>
    <dbReference type="NCBI Taxonomy" id="7660"/>
    <lineage>
        <taxon>Eukaryota</taxon>
        <taxon>Metazoa</taxon>
        <taxon>Echinodermata</taxon>
        <taxon>Eleutherozoa</taxon>
        <taxon>Echinozoa</taxon>
        <taxon>Echinoidea</taxon>
        <taxon>Euechinoidea</taxon>
        <taxon>Echinacea</taxon>
        <taxon>Camarodonta</taxon>
        <taxon>Echinidea</taxon>
        <taxon>Parechinidae</taxon>
        <taxon>Psammechinus</taxon>
    </lineage>
</organism>
<keyword id="KW-0007">Acetylation</keyword>
<keyword id="KW-0158">Chromosome</keyword>
<keyword id="KW-0238">DNA-binding</keyword>
<keyword id="KW-1017">Isopeptide bond</keyword>
<keyword id="KW-0488">Methylation</keyword>
<keyword id="KW-0544">Nucleosome core</keyword>
<keyword id="KW-0539">Nucleus</keyword>
<keyword id="KW-0597">Phosphoprotein</keyword>
<keyword id="KW-0832">Ubl conjugation</keyword>
<evidence type="ECO:0000250" key="1"/>
<evidence type="ECO:0000256" key="2">
    <source>
        <dbReference type="SAM" id="MobiDB-lite"/>
    </source>
</evidence>
<evidence type="ECO:0000305" key="3"/>
<reference key="1">
    <citation type="journal article" date="1980" name="Nucleic Acids Res.">
        <title>Ubiquitous and gene-specific regulatory 5' sequences in a sea urchin histone DNA clone coding for histone protein variants.</title>
        <authorList>
            <person name="Busslinger M."/>
            <person name="Portmann R."/>
            <person name="Irminger J.C."/>
            <person name="Birnstiel M.L."/>
        </authorList>
    </citation>
    <scope>NUCLEOTIDE SEQUENCE [GENOMIC DNA] (CLONE H19)</scope>
</reference>
<reference key="2">
    <citation type="journal article" date="1978" name="Cell">
        <title>Genes and spacers of cloned sea urchin histone DNA analyzed by sequencing.</title>
        <authorList>
            <person name="Schaffner W."/>
            <person name="Kunz G."/>
            <person name="Daetwyler H."/>
            <person name="Telford J."/>
            <person name="Smith H.O."/>
            <person name="Birnstiel M.L."/>
        </authorList>
    </citation>
    <scope>NUCLEOTIDE SEQUENCE [GENOMIC DNA] (CLONE H22)</scope>
</reference>
<reference key="3">
    <citation type="journal article" date="1979" name="Proc. Alfred Benzon Symp.">
        <title>Functional organization of the histone genes in the sea urchin Psammechinus: a progress report.</title>
        <authorList>
            <person name="Birnstiel M.L."/>
            <person name="Portmann R."/>
            <person name="Busslinger M."/>
            <person name="Schaffner W."/>
            <person name="Probst E."/>
            <person name="Kressmann A."/>
        </authorList>
    </citation>
    <scope>NUCLEOTIDE SEQUENCE [GENOMIC DNA] (CLONE H22)</scope>
</reference>
<dbReference type="EMBL" id="J01182">
    <property type="protein sequence ID" value="AAB59207.1"/>
    <property type="molecule type" value="Genomic_DNA"/>
</dbReference>
<dbReference type="EMBL" id="M10559">
    <property type="protein sequence ID" value="AAA30027.1"/>
    <property type="molecule type" value="Genomic_DNA"/>
</dbReference>
<dbReference type="EMBL" id="X01346">
    <property type="protein sequence ID" value="CAA25633.1"/>
    <property type="molecule type" value="Genomic_DNA"/>
</dbReference>
<dbReference type="EMBL" id="V01143">
    <property type="protein sequence ID" value="CAA24376.1"/>
    <property type="molecule type" value="Genomic_DNA"/>
</dbReference>
<dbReference type="PIR" id="A93719">
    <property type="entry name" value="HSURH9"/>
</dbReference>
<dbReference type="SMR" id="P69142"/>
<dbReference type="GO" id="GO:0000786">
    <property type="term" value="C:nucleosome"/>
    <property type="evidence" value="ECO:0007669"/>
    <property type="project" value="UniProtKB-KW"/>
</dbReference>
<dbReference type="GO" id="GO:0005634">
    <property type="term" value="C:nucleus"/>
    <property type="evidence" value="ECO:0007669"/>
    <property type="project" value="UniProtKB-SubCell"/>
</dbReference>
<dbReference type="GO" id="GO:0003677">
    <property type="term" value="F:DNA binding"/>
    <property type="evidence" value="ECO:0007669"/>
    <property type="project" value="UniProtKB-KW"/>
</dbReference>
<dbReference type="GO" id="GO:0046982">
    <property type="term" value="F:protein heterodimerization activity"/>
    <property type="evidence" value="ECO:0007669"/>
    <property type="project" value="InterPro"/>
</dbReference>
<dbReference type="GO" id="GO:0030527">
    <property type="term" value="F:structural constituent of chromatin"/>
    <property type="evidence" value="ECO:0007669"/>
    <property type="project" value="InterPro"/>
</dbReference>
<dbReference type="CDD" id="cd00074">
    <property type="entry name" value="HFD_H2A"/>
    <property type="match status" value="1"/>
</dbReference>
<dbReference type="FunFam" id="1.10.20.10:FF:000020">
    <property type="entry name" value="Histone H2A"/>
    <property type="match status" value="1"/>
</dbReference>
<dbReference type="Gene3D" id="1.10.20.10">
    <property type="entry name" value="Histone, subunit A"/>
    <property type="match status" value="1"/>
</dbReference>
<dbReference type="InterPro" id="IPR009072">
    <property type="entry name" value="Histone-fold"/>
</dbReference>
<dbReference type="InterPro" id="IPR002119">
    <property type="entry name" value="Histone_H2A"/>
</dbReference>
<dbReference type="InterPro" id="IPR007125">
    <property type="entry name" value="Histone_H2A/H2B/H3"/>
</dbReference>
<dbReference type="InterPro" id="IPR032454">
    <property type="entry name" value="Histone_H2A_C"/>
</dbReference>
<dbReference type="InterPro" id="IPR032458">
    <property type="entry name" value="Histone_H2A_CS"/>
</dbReference>
<dbReference type="PANTHER" id="PTHR23430">
    <property type="entry name" value="HISTONE H2A"/>
    <property type="match status" value="1"/>
</dbReference>
<dbReference type="Pfam" id="PF00125">
    <property type="entry name" value="Histone"/>
    <property type="match status" value="1"/>
</dbReference>
<dbReference type="Pfam" id="PF16211">
    <property type="entry name" value="Histone_H2A_C"/>
    <property type="match status" value="1"/>
</dbReference>
<dbReference type="PRINTS" id="PR00620">
    <property type="entry name" value="HISTONEH2A"/>
</dbReference>
<dbReference type="SMART" id="SM00414">
    <property type="entry name" value="H2A"/>
    <property type="match status" value="1"/>
</dbReference>
<dbReference type="SUPFAM" id="SSF47113">
    <property type="entry name" value="Histone-fold"/>
    <property type="match status" value="1"/>
</dbReference>
<dbReference type="PROSITE" id="PS00046">
    <property type="entry name" value="HISTONE_H2A"/>
    <property type="match status" value="1"/>
</dbReference>
<accession>P69142</accession>
<accession>P02271</accession>
<protein>
    <recommendedName>
        <fullName>Histone H2A, embryonic</fullName>
    </recommendedName>
</protein>